<comment type="function">
    <text evidence="1">One of the primary rRNA binding proteins, it binds directly to 16S rRNA where it nucleates assembly of the head domain of the 30S subunit.</text>
</comment>
<comment type="subunit">
    <text evidence="1">Part of the 30S ribosomal subunit.</text>
</comment>
<comment type="subcellular location">
    <subcellularLocation>
        <location>Plastid</location>
        <location>Chloroplast</location>
    </subcellularLocation>
</comment>
<comment type="similarity">
    <text evidence="3">Belongs to the universal ribosomal protein uS7 family.</text>
</comment>
<evidence type="ECO:0000250" key="1"/>
<evidence type="ECO:0000255" key="2">
    <source>
        <dbReference type="HAMAP-Rule" id="MF_00480"/>
    </source>
</evidence>
<evidence type="ECO:0000305" key="3"/>
<geneLocation type="chloroplast"/>
<name>RR7_CRUWA</name>
<sequence length="155" mass="17357">MSRRGTAEEKTAKSDPIYRNRLVNMLVNRILKHGKKSLAYQIIYRALKKIQQKTETNPLSVLRQAIRGVTPDIAVKARRVGGSTHQVPIEIGSTQGKALAIRWLLGASRKRPGRNMAFKLSSELVDAAKGSGDAIRKKEETHRMAEANRAFAHFR</sequence>
<gene>
    <name type="primary">rps7-A</name>
</gene>
<gene>
    <name type="primary">rps7-B</name>
</gene>
<keyword id="KW-0150">Chloroplast</keyword>
<keyword id="KW-0934">Plastid</keyword>
<keyword id="KW-0687">Ribonucleoprotein</keyword>
<keyword id="KW-0689">Ribosomal protein</keyword>
<keyword id="KW-0694">RNA-binding</keyword>
<keyword id="KW-0699">rRNA-binding</keyword>
<protein>
    <recommendedName>
        <fullName evidence="2">Small ribosomal subunit protein uS7cz/uS7cy</fullName>
    </recommendedName>
    <alternativeName>
        <fullName>30S ribosomal protein S7, chloroplastic</fullName>
    </alternativeName>
</protein>
<organism>
    <name type="scientific">Crucihimalaya wallichii</name>
    <name type="common">Rock-cress</name>
    <name type="synonym">Arabidopsis campestris</name>
    <dbReference type="NCBI Taxonomy" id="78192"/>
    <lineage>
        <taxon>Eukaryota</taxon>
        <taxon>Viridiplantae</taxon>
        <taxon>Streptophyta</taxon>
        <taxon>Embryophyta</taxon>
        <taxon>Tracheophyta</taxon>
        <taxon>Spermatophyta</taxon>
        <taxon>Magnoliopsida</taxon>
        <taxon>eudicotyledons</taxon>
        <taxon>Gunneridae</taxon>
        <taxon>Pentapetalae</taxon>
        <taxon>rosids</taxon>
        <taxon>malvids</taxon>
        <taxon>Brassicales</taxon>
        <taxon>Brassicaceae</taxon>
        <taxon>Crucihimalayeae</taxon>
        <taxon>Crucihimalaya</taxon>
    </lineage>
</organism>
<proteinExistence type="inferred from homology"/>
<dbReference type="EMBL" id="AP009372">
    <property type="protein sequence ID" value="BAF50332.1"/>
    <property type="molecule type" value="Genomic_DNA"/>
</dbReference>
<dbReference type="EMBL" id="AP009372">
    <property type="protein sequence ID" value="BAF50349.1"/>
    <property type="molecule type" value="Genomic_DNA"/>
</dbReference>
<dbReference type="SMR" id="A4QKX7"/>
<dbReference type="GO" id="GO:0009507">
    <property type="term" value="C:chloroplast"/>
    <property type="evidence" value="ECO:0007669"/>
    <property type="project" value="UniProtKB-SubCell"/>
</dbReference>
<dbReference type="GO" id="GO:0015935">
    <property type="term" value="C:small ribosomal subunit"/>
    <property type="evidence" value="ECO:0007669"/>
    <property type="project" value="InterPro"/>
</dbReference>
<dbReference type="GO" id="GO:0019843">
    <property type="term" value="F:rRNA binding"/>
    <property type="evidence" value="ECO:0007669"/>
    <property type="project" value="UniProtKB-UniRule"/>
</dbReference>
<dbReference type="GO" id="GO:0003735">
    <property type="term" value="F:structural constituent of ribosome"/>
    <property type="evidence" value="ECO:0007669"/>
    <property type="project" value="InterPro"/>
</dbReference>
<dbReference type="GO" id="GO:0006412">
    <property type="term" value="P:translation"/>
    <property type="evidence" value="ECO:0007669"/>
    <property type="project" value="UniProtKB-UniRule"/>
</dbReference>
<dbReference type="CDD" id="cd14871">
    <property type="entry name" value="uS7_Chloroplast"/>
    <property type="match status" value="1"/>
</dbReference>
<dbReference type="FunFam" id="1.10.455.10:FF:000001">
    <property type="entry name" value="30S ribosomal protein S7"/>
    <property type="match status" value="1"/>
</dbReference>
<dbReference type="Gene3D" id="1.10.455.10">
    <property type="entry name" value="Ribosomal protein S7 domain"/>
    <property type="match status" value="1"/>
</dbReference>
<dbReference type="HAMAP" id="MF_00480_B">
    <property type="entry name" value="Ribosomal_uS7_B"/>
    <property type="match status" value="1"/>
</dbReference>
<dbReference type="InterPro" id="IPR000235">
    <property type="entry name" value="Ribosomal_uS7"/>
</dbReference>
<dbReference type="InterPro" id="IPR005717">
    <property type="entry name" value="Ribosomal_uS7_bac/org-type"/>
</dbReference>
<dbReference type="InterPro" id="IPR020606">
    <property type="entry name" value="Ribosomal_uS7_CS"/>
</dbReference>
<dbReference type="InterPro" id="IPR023798">
    <property type="entry name" value="Ribosomal_uS7_dom"/>
</dbReference>
<dbReference type="InterPro" id="IPR036823">
    <property type="entry name" value="Ribosomal_uS7_dom_sf"/>
</dbReference>
<dbReference type="NCBIfam" id="TIGR01029">
    <property type="entry name" value="rpsG_bact"/>
    <property type="match status" value="1"/>
</dbReference>
<dbReference type="PANTHER" id="PTHR11205">
    <property type="entry name" value="RIBOSOMAL PROTEIN S7"/>
    <property type="match status" value="1"/>
</dbReference>
<dbReference type="Pfam" id="PF00177">
    <property type="entry name" value="Ribosomal_S7"/>
    <property type="match status" value="1"/>
</dbReference>
<dbReference type="PIRSF" id="PIRSF002122">
    <property type="entry name" value="RPS7p_RPS7a_RPS5e_RPS7o"/>
    <property type="match status" value="1"/>
</dbReference>
<dbReference type="SUPFAM" id="SSF47973">
    <property type="entry name" value="Ribosomal protein S7"/>
    <property type="match status" value="1"/>
</dbReference>
<dbReference type="PROSITE" id="PS00052">
    <property type="entry name" value="RIBOSOMAL_S7"/>
    <property type="match status" value="1"/>
</dbReference>
<feature type="chain" id="PRO_0000344332" description="Small ribosomal subunit protein uS7cz/uS7cy">
    <location>
        <begin position="1"/>
        <end position="155"/>
    </location>
</feature>
<reference key="1">
    <citation type="submission" date="2007-03" db="EMBL/GenBank/DDBJ databases">
        <title>Sequencing analysis of Crucihimalaya wallichii chloroplast DNA.</title>
        <authorList>
            <person name="Hosouchi T."/>
            <person name="Tsuruoka H."/>
            <person name="Kotani H."/>
        </authorList>
    </citation>
    <scope>NUCLEOTIDE SEQUENCE [LARGE SCALE GENOMIC DNA]</scope>
</reference>
<accession>A4QKX7</accession>